<proteinExistence type="inferred from homology"/>
<name>MSBA_HAEIN</name>
<dbReference type="EC" id="7.5.2.6" evidence="1"/>
<dbReference type="EMBL" id="L42023">
    <property type="protein sequence ID" value="AAC21738.1"/>
    <property type="molecule type" value="Genomic_DNA"/>
</dbReference>
<dbReference type="EMBL" id="L20805">
    <property type="protein sequence ID" value="AAC13734.1"/>
    <property type="molecule type" value="Genomic_DNA"/>
</dbReference>
<dbReference type="PIR" id="H64045">
    <property type="entry name" value="H64045"/>
</dbReference>
<dbReference type="RefSeq" id="NP_438233.1">
    <property type="nucleotide sequence ID" value="NC_000907.1"/>
</dbReference>
<dbReference type="SMR" id="P44407"/>
<dbReference type="STRING" id="71421.HI_0060"/>
<dbReference type="EnsemblBacteria" id="AAC21738">
    <property type="protein sequence ID" value="AAC21738"/>
    <property type="gene ID" value="HI_0060"/>
</dbReference>
<dbReference type="KEGG" id="hin:HI_0060"/>
<dbReference type="PATRIC" id="fig|71421.8.peg.60"/>
<dbReference type="eggNOG" id="COG1132">
    <property type="taxonomic scope" value="Bacteria"/>
</dbReference>
<dbReference type="HOGENOM" id="CLU_000604_84_3_6"/>
<dbReference type="OrthoDB" id="9806127at2"/>
<dbReference type="PhylomeDB" id="P44407"/>
<dbReference type="BioCyc" id="HINF71421:G1GJ1-61-MONOMER"/>
<dbReference type="Proteomes" id="UP000000579">
    <property type="component" value="Chromosome"/>
</dbReference>
<dbReference type="GO" id="GO:0005886">
    <property type="term" value="C:plasma membrane"/>
    <property type="evidence" value="ECO:0007669"/>
    <property type="project" value="UniProtKB-SubCell"/>
</dbReference>
<dbReference type="GO" id="GO:0140359">
    <property type="term" value="F:ABC-type transporter activity"/>
    <property type="evidence" value="ECO:0007669"/>
    <property type="project" value="InterPro"/>
</dbReference>
<dbReference type="GO" id="GO:0005524">
    <property type="term" value="F:ATP binding"/>
    <property type="evidence" value="ECO:0007669"/>
    <property type="project" value="UniProtKB-KW"/>
</dbReference>
<dbReference type="GO" id="GO:0016887">
    <property type="term" value="F:ATP hydrolysis activity"/>
    <property type="evidence" value="ECO:0007669"/>
    <property type="project" value="InterPro"/>
</dbReference>
<dbReference type="GO" id="GO:0034040">
    <property type="term" value="F:ATPase-coupled lipid transmembrane transporter activity"/>
    <property type="evidence" value="ECO:0000318"/>
    <property type="project" value="GO_Central"/>
</dbReference>
<dbReference type="GO" id="GO:0055085">
    <property type="term" value="P:transmembrane transport"/>
    <property type="evidence" value="ECO:0000318"/>
    <property type="project" value="GO_Central"/>
</dbReference>
<dbReference type="CDD" id="cd18552">
    <property type="entry name" value="ABC_6TM_MsbA_like"/>
    <property type="match status" value="1"/>
</dbReference>
<dbReference type="FunFam" id="1.20.1560.10:FF:000008">
    <property type="entry name" value="Lipid A export ATP-binding/permease protein MsbA"/>
    <property type="match status" value="1"/>
</dbReference>
<dbReference type="FunFam" id="3.40.50.300:FF:000140">
    <property type="entry name" value="Lipid A export ATP-binding/permease protein MsbA"/>
    <property type="match status" value="1"/>
</dbReference>
<dbReference type="Gene3D" id="1.20.1560.10">
    <property type="entry name" value="ABC transporter type 1, transmembrane domain"/>
    <property type="match status" value="1"/>
</dbReference>
<dbReference type="Gene3D" id="3.40.50.300">
    <property type="entry name" value="P-loop containing nucleotide triphosphate hydrolases"/>
    <property type="match status" value="1"/>
</dbReference>
<dbReference type="InterPro" id="IPR003593">
    <property type="entry name" value="AAA+_ATPase"/>
</dbReference>
<dbReference type="InterPro" id="IPR011527">
    <property type="entry name" value="ABC1_TM_dom"/>
</dbReference>
<dbReference type="InterPro" id="IPR036640">
    <property type="entry name" value="ABC1_TM_sf"/>
</dbReference>
<dbReference type="InterPro" id="IPR003439">
    <property type="entry name" value="ABC_transporter-like_ATP-bd"/>
</dbReference>
<dbReference type="InterPro" id="IPR017871">
    <property type="entry name" value="ABC_transporter-like_CS"/>
</dbReference>
<dbReference type="InterPro" id="IPR011917">
    <property type="entry name" value="ABC_transpr_lipidA"/>
</dbReference>
<dbReference type="InterPro" id="IPR027417">
    <property type="entry name" value="P-loop_NTPase"/>
</dbReference>
<dbReference type="InterPro" id="IPR039421">
    <property type="entry name" value="Type_1_exporter"/>
</dbReference>
<dbReference type="NCBIfam" id="TIGR02203">
    <property type="entry name" value="MsbA_lipidA"/>
    <property type="match status" value="1"/>
</dbReference>
<dbReference type="NCBIfam" id="NF008381">
    <property type="entry name" value="PRK11176.1"/>
    <property type="match status" value="1"/>
</dbReference>
<dbReference type="PANTHER" id="PTHR43394:SF1">
    <property type="entry name" value="ATP-BINDING CASSETTE SUB-FAMILY B MEMBER 10, MITOCHONDRIAL"/>
    <property type="match status" value="1"/>
</dbReference>
<dbReference type="PANTHER" id="PTHR43394">
    <property type="entry name" value="ATP-DEPENDENT PERMEASE MDL1, MITOCHONDRIAL"/>
    <property type="match status" value="1"/>
</dbReference>
<dbReference type="Pfam" id="PF00664">
    <property type="entry name" value="ABC_membrane"/>
    <property type="match status" value="1"/>
</dbReference>
<dbReference type="Pfam" id="PF00005">
    <property type="entry name" value="ABC_tran"/>
    <property type="match status" value="1"/>
</dbReference>
<dbReference type="SMART" id="SM00382">
    <property type="entry name" value="AAA"/>
    <property type="match status" value="1"/>
</dbReference>
<dbReference type="SUPFAM" id="SSF90123">
    <property type="entry name" value="ABC transporter transmembrane region"/>
    <property type="match status" value="1"/>
</dbReference>
<dbReference type="SUPFAM" id="SSF52540">
    <property type="entry name" value="P-loop containing nucleoside triphosphate hydrolases"/>
    <property type="match status" value="1"/>
</dbReference>
<dbReference type="PROSITE" id="PS50929">
    <property type="entry name" value="ABC_TM1F"/>
    <property type="match status" value="1"/>
</dbReference>
<dbReference type="PROSITE" id="PS00211">
    <property type="entry name" value="ABC_TRANSPORTER_1"/>
    <property type="match status" value="1"/>
</dbReference>
<dbReference type="PROSITE" id="PS50893">
    <property type="entry name" value="ABC_TRANSPORTER_2"/>
    <property type="match status" value="1"/>
</dbReference>
<dbReference type="PROSITE" id="PS51239">
    <property type="entry name" value="MSBA"/>
    <property type="match status" value="1"/>
</dbReference>
<sequence length="587" mass="64912">MQEQKLQENDFSTLQTFKRLWPMIKPFKAGLIVSGVALVFNALADSGLIYLLKPLLDDGFGKANHSFLKMMAFVVVGMIILRGITNFISNYCLAWVSGKVVMTMRRRLFKHLMFMPVSFFDQNSTGRLLSRITYDSQMIASSSSGSLITIVREGAYIISLFAVMFYTSWELTIVLFIIGPIIAVLIRLVSKIFRRLSKNLQDSMGELTSATEQMLKGHKVVLSFGGQHVEEVHFNHVSNDMRRKSMKMVTANSISDPVVQVIASLALATVLYLATTPLIAEDNLSAGSFTVVFSSMLAMMRPLKSLTAVNAQFQSGMAACQTLFAILDLEPEKDDGAYKAEPAKGELEFKNVSFAYQGKDELALNNISFSVPAGKTVALVGRSGSGKSTIANLVTRFYDIEQGEILLDGVNIQDYRLSNLRENCAVVSQQVHLFNDTIANNIAYAAQDKYSREEIIAAAKAAYALEFIEKLPQVFDTVIGENGTSLSGGQRQRLAIARALLRNSPVLILDEATSALDTESERAIQSALEELKKDRTVVVIAHRLSTIENADEILVIDHGEIRERGNHKTLLEQNGAYKQLHSMQFTG</sequence>
<reference key="1">
    <citation type="journal article" date="1995" name="Science">
        <title>Whole-genome random sequencing and assembly of Haemophilus influenzae Rd.</title>
        <authorList>
            <person name="Fleischmann R.D."/>
            <person name="Adams M.D."/>
            <person name="White O."/>
            <person name="Clayton R.A."/>
            <person name="Kirkness E.F."/>
            <person name="Kerlavage A.R."/>
            <person name="Bult C.J."/>
            <person name="Tomb J.-F."/>
            <person name="Dougherty B.A."/>
            <person name="Merrick J.M."/>
            <person name="McKenney K."/>
            <person name="Sutton G.G."/>
            <person name="FitzHugh W."/>
            <person name="Fields C.A."/>
            <person name="Gocayne J.D."/>
            <person name="Scott J.D."/>
            <person name="Shirley R."/>
            <person name="Liu L.-I."/>
            <person name="Glodek A."/>
            <person name="Kelley J.M."/>
            <person name="Weidman J.F."/>
            <person name="Phillips C.A."/>
            <person name="Spriggs T."/>
            <person name="Hedblom E."/>
            <person name="Cotton M.D."/>
            <person name="Utterback T.R."/>
            <person name="Hanna M.C."/>
            <person name="Nguyen D.T."/>
            <person name="Saudek D.M."/>
            <person name="Brandon R.C."/>
            <person name="Fine L.D."/>
            <person name="Fritchman J.L."/>
            <person name="Fuhrmann J.L."/>
            <person name="Geoghagen N.S.M."/>
            <person name="Gnehm C.L."/>
            <person name="McDonald L.A."/>
            <person name="Small K.V."/>
            <person name="Fraser C.M."/>
            <person name="Smith H.O."/>
            <person name="Venter J.C."/>
        </authorList>
    </citation>
    <scope>NUCLEOTIDE SEQUENCE [LARGE SCALE GENOMIC DNA]</scope>
    <source>
        <strain>ATCC 51907 / DSM 11121 / KW20 / Rd</strain>
    </source>
</reference>
<reference key="2">
    <citation type="journal article" date="1994" name="Gene">
        <title>Sequence of the rec-2 locus of Haemophilus influenzae: homologies to comE-ORF3 of Bacillus subtilis and msbA of Escherichia coli.</title>
        <authorList>
            <person name="Clifton S.W."/>
            <person name="McCarthy D."/>
            <person name="Roe B.A."/>
        </authorList>
    </citation>
    <scope>NUCLEOTIDE SEQUENCE [GENOMIC DNA] OF 1-458</scope>
    <source>
        <strain>BC200</strain>
    </source>
</reference>
<accession>P44407</accession>
<organism>
    <name type="scientific">Haemophilus influenzae (strain ATCC 51907 / DSM 11121 / KW20 / Rd)</name>
    <dbReference type="NCBI Taxonomy" id="71421"/>
    <lineage>
        <taxon>Bacteria</taxon>
        <taxon>Pseudomonadati</taxon>
        <taxon>Pseudomonadota</taxon>
        <taxon>Gammaproteobacteria</taxon>
        <taxon>Pasteurellales</taxon>
        <taxon>Pasteurellaceae</taxon>
        <taxon>Haemophilus</taxon>
    </lineage>
</organism>
<evidence type="ECO:0000255" key="1">
    <source>
        <dbReference type="HAMAP-Rule" id="MF_01703"/>
    </source>
</evidence>
<keyword id="KW-0067">ATP-binding</keyword>
<keyword id="KW-0997">Cell inner membrane</keyword>
<keyword id="KW-1003">Cell membrane</keyword>
<keyword id="KW-0445">Lipid transport</keyword>
<keyword id="KW-0472">Membrane</keyword>
<keyword id="KW-0547">Nucleotide-binding</keyword>
<keyword id="KW-1185">Reference proteome</keyword>
<keyword id="KW-1278">Translocase</keyword>
<keyword id="KW-0812">Transmembrane</keyword>
<keyword id="KW-1133">Transmembrane helix</keyword>
<keyword id="KW-0813">Transport</keyword>
<feature type="chain" id="PRO_0000092583" description="ATP-dependent lipid A-core flippase">
    <location>
        <begin position="1"/>
        <end position="587"/>
    </location>
</feature>
<feature type="transmembrane region" description="Helical" evidence="1">
    <location>
        <begin position="31"/>
        <end position="51"/>
    </location>
</feature>
<feature type="transmembrane region" description="Helical" evidence="1">
    <location>
        <begin position="68"/>
        <end position="88"/>
    </location>
</feature>
<feature type="transmembrane region" description="Helical" evidence="1">
    <location>
        <begin position="145"/>
        <end position="165"/>
    </location>
</feature>
<feature type="transmembrane region" description="Helical" evidence="1">
    <location>
        <begin position="166"/>
        <end position="186"/>
    </location>
</feature>
<feature type="transmembrane region" description="Helical" evidence="1">
    <location>
        <begin position="259"/>
        <end position="279"/>
    </location>
</feature>
<feature type="domain" description="ABC transmembrane type-1" evidence="1">
    <location>
        <begin position="32"/>
        <end position="315"/>
    </location>
</feature>
<feature type="domain" description="ABC transporter" evidence="1">
    <location>
        <begin position="347"/>
        <end position="583"/>
    </location>
</feature>
<feature type="binding site" evidence="1">
    <location>
        <begin position="381"/>
        <end position="388"/>
    </location>
    <ligand>
        <name>ATP</name>
        <dbReference type="ChEBI" id="CHEBI:30616"/>
    </ligand>
</feature>
<comment type="function">
    <text evidence="1">Involved in lipopolysaccharide (LPS) biosynthesis. Translocates lipid A-core from the inner to the outer leaflet of the inner membrane. Transmembrane domains (TMD) form a pore in the inner membrane and the ATP-binding domain (NBD) is responsible for energy generation.</text>
</comment>
<comment type="catalytic activity">
    <reaction evidence="1">
        <text>ATP + H2O + lipid A-core oligosaccharideSide 1 = ADP + phosphate + lipid A-core oligosaccharideSide 2.</text>
        <dbReference type="EC" id="7.5.2.6"/>
    </reaction>
</comment>
<comment type="subunit">
    <text evidence="1">Homodimer.</text>
</comment>
<comment type="subcellular location">
    <subcellularLocation>
        <location evidence="1">Cell inner membrane</location>
        <topology evidence="1">Multi-pass membrane protein</topology>
    </subcellularLocation>
</comment>
<comment type="domain">
    <text evidence="1">In MsbA the ATP-binding domain (NBD) and the transmembrane domain (TMD) are fused.</text>
</comment>
<comment type="similarity">
    <text evidence="1">Belongs to the ABC transporter superfamily. Lipid exporter (TC 3.A.1.106) family.</text>
</comment>
<protein>
    <recommendedName>
        <fullName evidence="1">ATP-dependent lipid A-core flippase</fullName>
        <ecNumber evidence="1">7.5.2.6</ecNumber>
    </recommendedName>
    <alternativeName>
        <fullName evidence="1">Lipid A export ATP-binding/permease protein MsbA</fullName>
    </alternativeName>
</protein>
<gene>
    <name evidence="1" type="primary">msbA</name>
    <name type="synonym">msh-1</name>
    <name type="ordered locus">HI_0060</name>
</gene>